<feature type="chain" id="PRO_0000382093" description="ATP synthase subunit delta">
    <location>
        <begin position="1"/>
        <end position="183"/>
    </location>
</feature>
<comment type="function">
    <text evidence="1">F(1)F(0) ATP synthase produces ATP from ADP in the presence of a proton or sodium gradient. F-type ATPases consist of two structural domains, F(1) containing the extramembraneous catalytic core and F(0) containing the membrane proton channel, linked together by a central stalk and a peripheral stalk. During catalysis, ATP synthesis in the catalytic domain of F(1) is coupled via a rotary mechanism of the central stalk subunits to proton translocation.</text>
</comment>
<comment type="function">
    <text evidence="1">This protein is part of the stalk that links CF(0) to CF(1). It either transmits conformational changes from CF(0) to CF(1) or is implicated in proton conduction.</text>
</comment>
<comment type="subunit">
    <text evidence="1">F-type ATPases have 2 components, F(1) - the catalytic core - and F(0) - the membrane proton channel. F(1) has five subunits: alpha(3), beta(3), gamma(1), delta(1), epsilon(1). F(0) has three main subunits: a(1), b(2) and c(10-14). The alpha and beta chains form an alternating ring which encloses part of the gamma chain. F(1) is attached to F(0) by a central stalk formed by the gamma and epsilon chains, while a peripheral stalk is formed by the delta and b chains.</text>
</comment>
<comment type="subcellular location">
    <subcellularLocation>
        <location evidence="1">Cell inner membrane</location>
        <topology evidence="1">Peripheral membrane protein</topology>
    </subcellularLocation>
</comment>
<comment type="similarity">
    <text evidence="1">Belongs to the ATPase delta chain family.</text>
</comment>
<organism>
    <name type="scientific">Desulfatibacillum aliphaticivorans</name>
    <dbReference type="NCBI Taxonomy" id="218208"/>
    <lineage>
        <taxon>Bacteria</taxon>
        <taxon>Pseudomonadati</taxon>
        <taxon>Thermodesulfobacteriota</taxon>
        <taxon>Desulfobacteria</taxon>
        <taxon>Desulfobacterales</taxon>
        <taxon>Desulfatibacillaceae</taxon>
        <taxon>Desulfatibacillum</taxon>
    </lineage>
</organism>
<name>ATPD_DESAL</name>
<sequence>MKNLKVARRYAKALLLIGKEDGQAEVYREELEAFSSLFKANPDLEAAISNPIYEAKGRQALLRSVVEKSGVSAVTASYLLLLFDKGRIGFLDVITSEYKEMADELKGIARASVSAATELSNETIEKIRSGLGRLTGKEVVLTVSQDPALIGGIVTKIGDLVLDGSIRTQLLNLKETLKRSEAV</sequence>
<accession>B8FGT7</accession>
<protein>
    <recommendedName>
        <fullName evidence="1">ATP synthase subunit delta</fullName>
    </recommendedName>
    <alternativeName>
        <fullName evidence="1">ATP synthase F(1) sector subunit delta</fullName>
    </alternativeName>
    <alternativeName>
        <fullName evidence="1">F-type ATPase subunit delta</fullName>
        <shortName evidence="1">F-ATPase subunit delta</shortName>
    </alternativeName>
</protein>
<dbReference type="EMBL" id="CP001322">
    <property type="protein sequence ID" value="ACL05317.1"/>
    <property type="molecule type" value="Genomic_DNA"/>
</dbReference>
<dbReference type="RefSeq" id="WP_015948374.1">
    <property type="nucleotide sequence ID" value="NC_011768.1"/>
</dbReference>
<dbReference type="SMR" id="B8FGT7"/>
<dbReference type="KEGG" id="dal:Dalk_3629"/>
<dbReference type="eggNOG" id="COG0712">
    <property type="taxonomic scope" value="Bacteria"/>
</dbReference>
<dbReference type="HOGENOM" id="CLU_085114_1_1_7"/>
<dbReference type="Proteomes" id="UP000000739">
    <property type="component" value="Chromosome"/>
</dbReference>
<dbReference type="GO" id="GO:0005886">
    <property type="term" value="C:plasma membrane"/>
    <property type="evidence" value="ECO:0007669"/>
    <property type="project" value="UniProtKB-SubCell"/>
</dbReference>
<dbReference type="GO" id="GO:0045259">
    <property type="term" value="C:proton-transporting ATP synthase complex"/>
    <property type="evidence" value="ECO:0007669"/>
    <property type="project" value="UniProtKB-KW"/>
</dbReference>
<dbReference type="GO" id="GO:0046933">
    <property type="term" value="F:proton-transporting ATP synthase activity, rotational mechanism"/>
    <property type="evidence" value="ECO:0007669"/>
    <property type="project" value="UniProtKB-UniRule"/>
</dbReference>
<dbReference type="Gene3D" id="1.10.520.20">
    <property type="entry name" value="N-terminal domain of the delta subunit of the F1F0-ATP synthase"/>
    <property type="match status" value="1"/>
</dbReference>
<dbReference type="HAMAP" id="MF_01416">
    <property type="entry name" value="ATP_synth_delta_bact"/>
    <property type="match status" value="1"/>
</dbReference>
<dbReference type="InterPro" id="IPR026015">
    <property type="entry name" value="ATP_synth_OSCP/delta_N_sf"/>
</dbReference>
<dbReference type="InterPro" id="IPR000711">
    <property type="entry name" value="ATPase_OSCP/dsu"/>
</dbReference>
<dbReference type="NCBIfam" id="TIGR01145">
    <property type="entry name" value="ATP_synt_delta"/>
    <property type="match status" value="1"/>
</dbReference>
<dbReference type="PANTHER" id="PTHR11910">
    <property type="entry name" value="ATP SYNTHASE DELTA CHAIN"/>
    <property type="match status" value="1"/>
</dbReference>
<dbReference type="Pfam" id="PF00213">
    <property type="entry name" value="OSCP"/>
    <property type="match status" value="1"/>
</dbReference>
<dbReference type="PRINTS" id="PR00125">
    <property type="entry name" value="ATPASEDELTA"/>
</dbReference>
<dbReference type="SUPFAM" id="SSF47928">
    <property type="entry name" value="N-terminal domain of the delta subunit of the F1F0-ATP synthase"/>
    <property type="match status" value="1"/>
</dbReference>
<keyword id="KW-0066">ATP synthesis</keyword>
<keyword id="KW-0997">Cell inner membrane</keyword>
<keyword id="KW-1003">Cell membrane</keyword>
<keyword id="KW-0139">CF(1)</keyword>
<keyword id="KW-0375">Hydrogen ion transport</keyword>
<keyword id="KW-0406">Ion transport</keyword>
<keyword id="KW-0472">Membrane</keyword>
<keyword id="KW-1185">Reference proteome</keyword>
<keyword id="KW-0813">Transport</keyword>
<gene>
    <name evidence="1" type="primary">atpH</name>
    <name type="ordered locus">Dalk_3629</name>
</gene>
<proteinExistence type="inferred from homology"/>
<evidence type="ECO:0000255" key="1">
    <source>
        <dbReference type="HAMAP-Rule" id="MF_01416"/>
    </source>
</evidence>
<reference key="1">
    <citation type="journal article" date="2012" name="Environ. Microbiol.">
        <title>The genome sequence of Desulfatibacillum alkenivorans AK-01: a blueprint for anaerobic alkane oxidation.</title>
        <authorList>
            <person name="Callaghan A.V."/>
            <person name="Morris B.E."/>
            <person name="Pereira I.A."/>
            <person name="McInerney M.J."/>
            <person name="Austin R.N."/>
            <person name="Groves J.T."/>
            <person name="Kukor J.J."/>
            <person name="Suflita J.M."/>
            <person name="Young L.Y."/>
            <person name="Zylstra G.J."/>
            <person name="Wawrik B."/>
        </authorList>
    </citation>
    <scope>NUCLEOTIDE SEQUENCE [LARGE SCALE GENOMIC DNA]</scope>
    <source>
        <strain>AK-01</strain>
    </source>
</reference>